<keyword id="KW-0007">Acetylation</keyword>
<keyword id="KW-0010">Activator</keyword>
<keyword id="KW-0112">Calmodulin-binding</keyword>
<keyword id="KW-0963">Cytoplasm</keyword>
<keyword id="KW-0221">Differentiation</keyword>
<keyword id="KW-0238">DNA-binding</keyword>
<keyword id="KW-0539">Nucleus</keyword>
<keyword id="KW-1185">Reference proteome</keyword>
<keyword id="KW-0678">Repressor</keyword>
<keyword id="KW-0726">Sexual differentiation</keyword>
<keyword id="KW-0804">Transcription</keyword>
<keyword id="KW-0805">Transcription regulation</keyword>
<sequence>MFRVLNDDVYSPAVVQQQTTLAFRKDSSLCTDSHSANDQCERGEHVRESSQDHVKRPMNAFIVWSRERRRKVALEYPKMKNSDISKQLGYEWKRLTDAEKRPFFEEAQRLLAIHRDKYPGYKYRPRRRAKRPQKSLPADSSILCNPMHVETLHPFTYRDGCAKTTYSQMESQLSRSQSVIITNSLLQKEHHSSWTSLGHNKVTLATRISADFPFNKSLEPGLSCAYFQY</sequence>
<gene>
    <name type="primary">SRY</name>
    <name type="synonym">TDF</name>
</gene>
<proteinExistence type="inferred from homology"/>
<comment type="function">
    <text evidence="1 2">Transcriptional regulator that controls a genetic switch in male development. It is necessary and sufficient for initiating male sex determination by directing the development of supporting cell precursors (pre-Sertoli cells) as Sertoli rather than granulosa cells. Involved in different aspects of gene regulation including promoter activation or repression. Binds to the DNA consensus sequence 5'-[AT]AACAA[AT]-3'. SRY HMG box recognizes DNA by partial intercalation in the minor groove and promotes DNA bending. Also involved in pre-mRNA splicing (By similarity). In male adult brain involved in the maintenance of motor functions of dopaminergic neurons (By similarity).</text>
</comment>
<comment type="subunit">
    <text evidence="2">Interacts with CALM, EP300, HDAC3, KPNB1, ZNF208 isoform KRAB-O, PARP1, SLC9A3R2 and WT1. The interaction with EP300 modulates its DNA-binding activity. The interaction with KPNB1 is sensitive to dissociation by Ran in the GTP-bound form. Interaction with PARP1 impaired its DNA-binding activity.</text>
</comment>
<comment type="subcellular location">
    <subcellularLocation>
        <location evidence="2">Nucleus speckle</location>
    </subcellularLocation>
    <subcellularLocation>
        <location evidence="2">Cytoplasm</location>
    </subcellularLocation>
    <subcellularLocation>
        <location evidence="2">Nucleus</location>
    </subcellularLocation>
</comment>
<comment type="PTM">
    <text evidence="2">Acetylation of Lys-130 contributes to its nuclear localization and enhances its interaction with KPNB1. Deacetylated by HDAC3.</text>
</comment>
<comment type="similarity">
    <text evidence="5">Belongs to the SRY family.</text>
</comment>
<comment type="online information" name="Protein Spotlight">
    <link uri="https://www.proteinspotlight.org/back_issues/080"/>
    <text>The tenuous nature of sex - Issue 80 of March 2007</text>
</comment>
<evidence type="ECO:0000250" key="1">
    <source>
        <dbReference type="UniProtKB" id="P36394"/>
    </source>
</evidence>
<evidence type="ECO:0000250" key="2">
    <source>
        <dbReference type="UniProtKB" id="Q05066"/>
    </source>
</evidence>
<evidence type="ECO:0000255" key="3">
    <source>
        <dbReference type="PROSITE-ProRule" id="PRU00267"/>
    </source>
</evidence>
<evidence type="ECO:0000256" key="4">
    <source>
        <dbReference type="SAM" id="MobiDB-lite"/>
    </source>
</evidence>
<evidence type="ECO:0000305" key="5"/>
<protein>
    <recommendedName>
        <fullName>Sex-determining region Y protein</fullName>
    </recommendedName>
    <alternativeName>
        <fullName>Testis-determining factor</fullName>
    </alternativeName>
</protein>
<organism>
    <name type="scientific">Bos mutus grunniens</name>
    <name type="common">Wild yak</name>
    <name type="synonym">Bos grunniens</name>
    <dbReference type="NCBI Taxonomy" id="30521"/>
    <lineage>
        <taxon>Eukaryota</taxon>
        <taxon>Metazoa</taxon>
        <taxon>Chordata</taxon>
        <taxon>Craniata</taxon>
        <taxon>Vertebrata</taxon>
        <taxon>Euteleostomi</taxon>
        <taxon>Mammalia</taxon>
        <taxon>Eutheria</taxon>
        <taxon>Laurasiatheria</taxon>
        <taxon>Artiodactyla</taxon>
        <taxon>Ruminantia</taxon>
        <taxon>Pecora</taxon>
        <taxon>Bovidae</taxon>
        <taxon>Bovinae</taxon>
        <taxon>Bos</taxon>
    </lineage>
</organism>
<accession>Q9XS37</accession>
<accession>Q7JGF8</accession>
<reference key="1">
    <citation type="journal article" date="2001" name="Genet. Sel. Evol.">
        <title>Characterization of Bovidae sex-determining gene SRY.</title>
        <authorList>
            <person name="Cheng H."/>
            <person name="Shi H."/>
            <person name="Zhou R."/>
            <person name="Guo Y."/>
            <person name="Liu L."/>
            <person name="Liu J."/>
            <person name="Jiang Y."/>
            <person name="Kudo T."/>
            <person name="Sutou S."/>
        </authorList>
    </citation>
    <scope>NUCLEOTIDE SEQUENCE [GENOMIC DNA]</scope>
</reference>
<reference key="2">
    <citation type="journal article" date="2003" name="Anim. Genet.">
        <title>Phylogenies using mtDNA and SRY provide evidence for male-mediated introgression in Asian domestic cattle.</title>
        <authorList>
            <person name="Kikkawa Y."/>
            <person name="Takada T."/>
            <person name="Sutopo X."/>
            <person name="Nomura K."/>
            <person name="Namikawa T."/>
            <person name="Yonekawa H."/>
            <person name="Amano T."/>
        </authorList>
    </citation>
    <scope>NUCLEOTIDE SEQUENCE [GENOMIC DNA]</scope>
</reference>
<reference key="3">
    <citation type="journal article" date="2004" name="Mol. Biol. Evol.">
        <title>Maternal and paternal lineages in cross-breeding bovine species. Has wisent a hybrid origin?</title>
        <authorList>
            <person name="Verkaar E.L.C."/>
            <person name="Nijman I.J."/>
            <person name="Beeke M."/>
            <person name="Hanekamp E."/>
            <person name="Lenstra J.A."/>
        </authorList>
    </citation>
    <scope>NUCLEOTIDE SEQUENCE [GENOMIC DNA]</scope>
</reference>
<name>SRY_BOSMU</name>
<feature type="chain" id="PRO_0000048647" description="Sex-determining region Y protein">
    <location>
        <begin position="1"/>
        <end position="229"/>
    </location>
</feature>
<feature type="DNA-binding region" description="HMG box" evidence="3">
    <location>
        <begin position="54"/>
        <end position="122"/>
    </location>
</feature>
<feature type="region of interest" description="Disordered" evidence="4">
    <location>
        <begin position="33"/>
        <end position="52"/>
    </location>
</feature>
<feature type="compositionally biased region" description="Basic and acidic residues" evidence="4">
    <location>
        <begin position="39"/>
        <end position="52"/>
    </location>
</feature>
<feature type="sequence conflict" description="In Ref. 3; AAL86545." evidence="5" ref="3">
    <original>Y</original>
    <variation>N</variation>
    <location>
        <position position="76"/>
    </location>
</feature>
<dbReference type="EMBL" id="AF148463">
    <property type="protein sequence ID" value="AAD31532.1"/>
    <property type="molecule type" value="Genomic_DNA"/>
</dbReference>
<dbReference type="EMBL" id="AB077320">
    <property type="protein sequence ID" value="BAC41385.1"/>
    <property type="molecule type" value="Genomic_DNA"/>
</dbReference>
<dbReference type="EMBL" id="AY079144">
    <property type="protein sequence ID" value="AAL86545.1"/>
    <property type="molecule type" value="Genomic_DNA"/>
</dbReference>
<dbReference type="SMR" id="Q9XS37"/>
<dbReference type="Proteomes" id="UP000694520">
    <property type="component" value="Unplaced"/>
</dbReference>
<dbReference type="GO" id="GO:0005737">
    <property type="term" value="C:cytoplasm"/>
    <property type="evidence" value="ECO:0007669"/>
    <property type="project" value="UniProtKB-SubCell"/>
</dbReference>
<dbReference type="GO" id="GO:0016607">
    <property type="term" value="C:nuclear speck"/>
    <property type="evidence" value="ECO:0007669"/>
    <property type="project" value="UniProtKB-SubCell"/>
</dbReference>
<dbReference type="GO" id="GO:0005634">
    <property type="term" value="C:nucleus"/>
    <property type="evidence" value="ECO:0000250"/>
    <property type="project" value="UniProtKB"/>
</dbReference>
<dbReference type="GO" id="GO:0005516">
    <property type="term" value="F:calmodulin binding"/>
    <property type="evidence" value="ECO:0007669"/>
    <property type="project" value="UniProtKB-KW"/>
</dbReference>
<dbReference type="GO" id="GO:0001228">
    <property type="term" value="F:DNA-binding transcription activator activity, RNA polymerase II-specific"/>
    <property type="evidence" value="ECO:0007669"/>
    <property type="project" value="TreeGrafter"/>
</dbReference>
<dbReference type="GO" id="GO:0000978">
    <property type="term" value="F:RNA polymerase II cis-regulatory region sequence-specific DNA binding"/>
    <property type="evidence" value="ECO:0007669"/>
    <property type="project" value="TreeGrafter"/>
</dbReference>
<dbReference type="GO" id="GO:0030154">
    <property type="term" value="P:cell differentiation"/>
    <property type="evidence" value="ECO:0007669"/>
    <property type="project" value="UniProtKB-KW"/>
</dbReference>
<dbReference type="GO" id="GO:0030238">
    <property type="term" value="P:male sex determination"/>
    <property type="evidence" value="ECO:0007669"/>
    <property type="project" value="InterPro"/>
</dbReference>
<dbReference type="GO" id="GO:0007548">
    <property type="term" value="P:sex differentiation"/>
    <property type="evidence" value="ECO:0007669"/>
    <property type="project" value="UniProtKB-KW"/>
</dbReference>
<dbReference type="CDD" id="cd22034">
    <property type="entry name" value="HMG-box_SoxA_SRY"/>
    <property type="match status" value="1"/>
</dbReference>
<dbReference type="FunFam" id="1.10.30.10:FF:000002">
    <property type="entry name" value="transcription factor Sox-2"/>
    <property type="match status" value="1"/>
</dbReference>
<dbReference type="Gene3D" id="1.10.30.10">
    <property type="entry name" value="High mobility group box domain"/>
    <property type="match status" value="1"/>
</dbReference>
<dbReference type="InterPro" id="IPR009071">
    <property type="entry name" value="HMG_box_dom"/>
</dbReference>
<dbReference type="InterPro" id="IPR036910">
    <property type="entry name" value="HMG_box_dom_sf"/>
</dbReference>
<dbReference type="InterPro" id="IPR017253">
    <property type="entry name" value="SRY"/>
</dbReference>
<dbReference type="InterPro" id="IPR050140">
    <property type="entry name" value="SRY-related_HMG-box_TF-like"/>
</dbReference>
<dbReference type="PANTHER" id="PTHR10270:SF161">
    <property type="entry name" value="SEX-DETERMINING REGION Y PROTEIN"/>
    <property type="match status" value="1"/>
</dbReference>
<dbReference type="PANTHER" id="PTHR10270">
    <property type="entry name" value="SOX TRANSCRIPTION FACTOR"/>
    <property type="match status" value="1"/>
</dbReference>
<dbReference type="Pfam" id="PF00505">
    <property type="entry name" value="HMG_box"/>
    <property type="match status" value="1"/>
</dbReference>
<dbReference type="PIRSF" id="PIRSF037653">
    <property type="entry name" value="SRY"/>
    <property type="match status" value="1"/>
</dbReference>
<dbReference type="SMART" id="SM00398">
    <property type="entry name" value="HMG"/>
    <property type="match status" value="1"/>
</dbReference>
<dbReference type="SUPFAM" id="SSF47095">
    <property type="entry name" value="HMG-box"/>
    <property type="match status" value="1"/>
</dbReference>
<dbReference type="PROSITE" id="PS50118">
    <property type="entry name" value="HMG_BOX_2"/>
    <property type="match status" value="1"/>
</dbReference>